<proteinExistence type="inferred from homology"/>
<organism evidence="4">
    <name type="scientific">Pseudomonas phage phiKMV</name>
    <dbReference type="NCBI Taxonomy" id="204270"/>
    <lineage>
        <taxon>Viruses</taxon>
        <taxon>Duplodnaviria</taxon>
        <taxon>Heunggongvirae</taxon>
        <taxon>Uroviricota</taxon>
        <taxon>Caudoviricetes</taxon>
        <taxon>Autographiviridae</taxon>
        <taxon>Krylovirinae</taxon>
        <taxon>Phikmvvirus</taxon>
        <taxon>Phikmvvirus phiKMV</taxon>
    </lineage>
</organism>
<keyword id="KW-0167">Capsid protein</keyword>
<keyword id="KW-1185">Reference proteome</keyword>
<keyword id="KW-0118">Viral capsid assembly</keyword>
<keyword id="KW-1171">Viral genome ejection through host cell envelope</keyword>
<keyword id="KW-0231">Viral genome packaging</keyword>
<keyword id="KW-1162">Viral penetration into host cytoplasm</keyword>
<keyword id="KW-1188">Viral release from host cell</keyword>
<keyword id="KW-1244">Viral short tail ejection system</keyword>
<keyword id="KW-0946">Virion</keyword>
<keyword id="KW-1160">Virus entry into host cell</keyword>
<dbReference type="EMBL" id="AJ505558">
    <property type="protein sequence ID" value="CAD44221.1"/>
    <property type="molecule type" value="Genomic_DNA"/>
</dbReference>
<dbReference type="RefSeq" id="NP_877469.1">
    <property type="nucleotide sequence ID" value="NC_005045.1"/>
</dbReference>
<dbReference type="SMR" id="Q7Y2D5"/>
<dbReference type="GeneID" id="1482611"/>
<dbReference type="KEGG" id="vg:1482611"/>
<dbReference type="OrthoDB" id="5112at10239"/>
<dbReference type="Proteomes" id="UP000000842">
    <property type="component" value="Genome"/>
</dbReference>
<dbReference type="GO" id="GO:0019028">
    <property type="term" value="C:viral capsid"/>
    <property type="evidence" value="ECO:0007669"/>
    <property type="project" value="UniProtKB-KW"/>
</dbReference>
<dbReference type="GO" id="GO:0099002">
    <property type="term" value="P:symbiont genome ejection through host cell envelope, short tail mechanism"/>
    <property type="evidence" value="ECO:0007669"/>
    <property type="project" value="UniProtKB-KW"/>
</dbReference>
<dbReference type="InterPro" id="IPR020991">
    <property type="entry name" value="Connector_podovirus"/>
</dbReference>
<dbReference type="Pfam" id="PF12236">
    <property type="entry name" value="Head-tail_con"/>
    <property type="match status" value="1"/>
</dbReference>
<name>PORTL_BPKMV</name>
<feature type="chain" id="PRO_0000432544" description="Portal protein">
    <location>
        <begin position="1"/>
        <end position="510"/>
    </location>
</feature>
<accession>Q7Y2D5</accession>
<gene>
    <name evidence="3" type="primary">gp30</name>
</gene>
<sequence>MKTTAAMLWEKLRDGSVEQRAIEFAKTTLPYLMVDPMSGSRGVVEHDFQSAGALLVNNLAAKLARSLFPTGIPFFRSELTDAIRREADSRDTDITEVTAALARVDRKATQRLFQNASLAVLTQVIKLLIVTGNALLYRDSDAATVVAWSLRSYAVRRDATGRWMDIVLKQRYKSKDLDEEYKQDLMRAGRNLSGSGSVDLYTHVQRKKGTAMEYAELYHEIDGVRVGKEGRWPIHLCPYIVPTWNLAPGEHYGRGHVEDYIGDFAKLSLLSEKLGLYELESLEVLNLVDEAKGAVVDDYQDAEMGDYVPGGAEAVRAYERGDYNKMAAIQQSLQAVVVRLNQAFMYGANQRDAERVTAEEVRITAEEAENTLGGTYSLLAENLQSPLAYVCLSEVDDALLQGLITKQHKPAIETGLPALSRSAAVQSMLNASQVIAGLAPIAQLDPRISLPKMMDTIWAAFSVDTSQFYKSADELQAEAEQQRQQAAQAQAAQETLLEGASDMTNALAGV</sequence>
<organismHost>
    <name type="scientific">Pseudomonas aeruginosa</name>
    <dbReference type="NCBI Taxonomy" id="287"/>
</organismHost>
<comment type="function">
    <text evidence="1">Forms the portal vertex of the capsid. This portal plays critical roles in head assembly, genome packaging, neck/tail attachment, and genome ejection. The portal protein multimerizes as a single ring-shaped homododecamer arranged around a central channel.</text>
</comment>
<comment type="subunit">
    <text evidence="1">Homododecamer.</text>
</comment>
<comment type="subcellular location">
    <subcellularLocation>
        <location evidence="1">Virion</location>
    </subcellularLocation>
</comment>
<comment type="similarity">
    <text evidence="2">Belongs to the podoviridae head-to-tail connector protein family.</text>
</comment>
<protein>
    <recommendedName>
        <fullName evidence="2">Portal protein</fullName>
    </recommendedName>
    <alternativeName>
        <fullName evidence="2">Head-to-tail connector</fullName>
    </alternativeName>
</protein>
<evidence type="ECO:0000250" key="1">
    <source>
        <dbReference type="UniProtKB" id="P03728"/>
    </source>
</evidence>
<evidence type="ECO:0000305" key="2"/>
<evidence type="ECO:0000312" key="3">
    <source>
        <dbReference type="EMBL" id="CAD44221.1"/>
    </source>
</evidence>
<evidence type="ECO:0000312" key="4">
    <source>
        <dbReference type="Proteomes" id="UP000000842"/>
    </source>
</evidence>
<reference key="1">
    <citation type="journal article" date="2003" name="Virology">
        <title>The genome of bacteriophage phiKMV, a T7-like virus infecting Pseudomonas aeruginosa.</title>
        <authorList>
            <person name="Lavigne R."/>
            <person name="Burkal'tseva M.V."/>
            <person name="Robben J."/>
            <person name="Sykilinda N.N."/>
            <person name="Kurochkina L.P."/>
            <person name="Grymonprez B."/>
            <person name="Jonckx B."/>
            <person name="Krylov V.N."/>
            <person name="Mesyanzhinov V.V."/>
            <person name="Volckaert G."/>
        </authorList>
    </citation>
    <scope>NUCLEOTIDE SEQUENCE [GENOMIC DNA]</scope>
</reference>